<reference key="1">
    <citation type="submission" date="1996-07" db="EMBL/GenBank/DDBJ databases">
        <authorList>
            <person name="Liu L.X."/>
        </authorList>
    </citation>
    <scope>NUCLEOTIDE SEQUENCE [MRNA]</scope>
</reference>
<sequence length="125" mass="14298">MGDVEKQTEIREKKARNVMRELKIQKLCLNICVGEFGDRLTRAAKVLEQLTGQTPVFSKARYTVRTFGIRRNEKIAVHCTVRGPKAEEILEKGLKVKEYELYKENFSDTGNFGLGVQEHIDLGIK</sequence>
<proteinExistence type="evidence at transcript level"/>
<feature type="chain" id="PRO_0000125094" description="Large ribosomal subunit protein uL5">
    <location>
        <begin position="1"/>
        <end position="125" status="greater than"/>
    </location>
</feature>
<feature type="non-terminal residue">
    <location>
        <position position="125"/>
    </location>
</feature>
<dbReference type="EMBL" id="U63521">
    <property type="protein sequence ID" value="AAB07369.1"/>
    <property type="molecule type" value="mRNA"/>
</dbReference>
<dbReference type="SMR" id="Q94793"/>
<dbReference type="Proteomes" id="UP000050794">
    <property type="component" value="Unassembled WGS sequence"/>
</dbReference>
<dbReference type="GO" id="GO:0005737">
    <property type="term" value="C:cytoplasm"/>
    <property type="evidence" value="ECO:0007669"/>
    <property type="project" value="UniProtKB-SubCell"/>
</dbReference>
<dbReference type="GO" id="GO:0005634">
    <property type="term" value="C:nucleus"/>
    <property type="evidence" value="ECO:0007669"/>
    <property type="project" value="UniProtKB-SubCell"/>
</dbReference>
<dbReference type="GO" id="GO:1990904">
    <property type="term" value="C:ribonucleoprotein complex"/>
    <property type="evidence" value="ECO:0007669"/>
    <property type="project" value="UniProtKB-KW"/>
</dbReference>
<dbReference type="GO" id="GO:0005840">
    <property type="term" value="C:ribosome"/>
    <property type="evidence" value="ECO:0007669"/>
    <property type="project" value="UniProtKB-KW"/>
</dbReference>
<dbReference type="GO" id="GO:0019843">
    <property type="term" value="F:rRNA binding"/>
    <property type="evidence" value="ECO:0007669"/>
    <property type="project" value="UniProtKB-KW"/>
</dbReference>
<dbReference type="GO" id="GO:0003735">
    <property type="term" value="F:structural constituent of ribosome"/>
    <property type="evidence" value="ECO:0007669"/>
    <property type="project" value="InterPro"/>
</dbReference>
<dbReference type="GO" id="GO:0006412">
    <property type="term" value="P:translation"/>
    <property type="evidence" value="ECO:0007669"/>
    <property type="project" value="InterPro"/>
</dbReference>
<dbReference type="FunFam" id="3.30.1440.10:FF:000002">
    <property type="entry name" value="60S ribosomal protein L11"/>
    <property type="match status" value="1"/>
</dbReference>
<dbReference type="Gene3D" id="3.30.1440.10">
    <property type="match status" value="1"/>
</dbReference>
<dbReference type="InterPro" id="IPR002132">
    <property type="entry name" value="Ribosomal_uL5"/>
</dbReference>
<dbReference type="InterPro" id="IPR031309">
    <property type="entry name" value="Ribosomal_uL5_C"/>
</dbReference>
<dbReference type="InterPro" id="IPR020929">
    <property type="entry name" value="Ribosomal_uL5_CS"/>
</dbReference>
<dbReference type="InterPro" id="IPR022803">
    <property type="entry name" value="Ribosomal_uL5_dom_sf"/>
</dbReference>
<dbReference type="InterPro" id="IPR031310">
    <property type="entry name" value="Ribosomal_uL5_N"/>
</dbReference>
<dbReference type="PANTHER" id="PTHR11994">
    <property type="entry name" value="60S RIBOSOMAL PROTEIN L11-RELATED"/>
    <property type="match status" value="1"/>
</dbReference>
<dbReference type="Pfam" id="PF00281">
    <property type="entry name" value="Ribosomal_L5"/>
    <property type="match status" value="1"/>
</dbReference>
<dbReference type="Pfam" id="PF00673">
    <property type="entry name" value="Ribosomal_L5_C"/>
    <property type="match status" value="1"/>
</dbReference>
<dbReference type="SUPFAM" id="SSF55282">
    <property type="entry name" value="RL5-like"/>
    <property type="match status" value="1"/>
</dbReference>
<dbReference type="PROSITE" id="PS00358">
    <property type="entry name" value="RIBOSOMAL_L5"/>
    <property type="match status" value="1"/>
</dbReference>
<protein>
    <recommendedName>
        <fullName evidence="2">Large ribosomal subunit protein uL5</fullName>
    </recommendedName>
    <alternativeName>
        <fullName>60S ribosomal protein L11</fullName>
    </alternativeName>
</protein>
<accession>Q94793</accession>
<keyword id="KW-0963">Cytoplasm</keyword>
<keyword id="KW-0539">Nucleus</keyword>
<keyword id="KW-0687">Ribonucleoprotein</keyword>
<keyword id="KW-0689">Ribosomal protein</keyword>
<keyword id="KW-0694">RNA-binding</keyword>
<keyword id="KW-0699">rRNA-binding</keyword>
<organism>
    <name type="scientific">Toxocara canis</name>
    <name type="common">Canine roundworm</name>
    <dbReference type="NCBI Taxonomy" id="6265"/>
    <lineage>
        <taxon>Eukaryota</taxon>
        <taxon>Metazoa</taxon>
        <taxon>Ecdysozoa</taxon>
        <taxon>Nematoda</taxon>
        <taxon>Chromadorea</taxon>
        <taxon>Rhabditida</taxon>
        <taxon>Spirurina</taxon>
        <taxon>Ascaridomorpha</taxon>
        <taxon>Ascaridoidea</taxon>
        <taxon>Toxocaridae</taxon>
        <taxon>Toxocara</taxon>
    </lineage>
</organism>
<name>RL11_TOXCA</name>
<comment type="function">
    <text evidence="1">Component of the ribosome, a large ribonucleoprotein complex responsible for the synthesis of proteins in the cell. The small ribosomal subunit (SSU) binds messenger RNAs (mRNAs) and translates the encoded message by selecting cognate aminoacyl-transfer RNA (tRNA) molecules. The large subunit (LSU) contains the ribosomal catalytic site termed the peptidyl transferase center (PTC), which catalyzes the formation of peptide bonds, thereby polymerizing the amino acids delivered by tRNAs into a polypeptide chain. The nascent polypeptides leave the ribosome through a tunnel in the LSU and interact with protein factors that function in enzymatic processing, targeting, and the membrane insertion of nascent chains at the exit of the ribosomal tunnel.</text>
</comment>
<comment type="subunit">
    <text evidence="1">Component of the large ribosomal subunit.</text>
</comment>
<comment type="subcellular location">
    <subcellularLocation>
        <location evidence="1">Nucleus</location>
    </subcellularLocation>
    <subcellularLocation>
        <location evidence="1">Cytoplasm</location>
    </subcellularLocation>
</comment>
<comment type="similarity">
    <text evidence="2">Belongs to the universal ribosomal protein uL5 family.</text>
</comment>
<evidence type="ECO:0000250" key="1">
    <source>
        <dbReference type="UniProtKB" id="P0C0W9"/>
    </source>
</evidence>
<evidence type="ECO:0000305" key="2"/>
<gene>
    <name type="primary">RPL11</name>
</gene>